<sequence>MAREGFTLACKECKMENYISKKNKKKHVEKLEINKFCSKCNSKTMHREKK</sequence>
<evidence type="ECO:0000255" key="1">
    <source>
        <dbReference type="HAMAP-Rule" id="MF_00294"/>
    </source>
</evidence>
<evidence type="ECO:0000305" key="2"/>
<protein>
    <recommendedName>
        <fullName evidence="1">Large ribosomal subunit protein bL33A</fullName>
    </recommendedName>
    <alternativeName>
        <fullName>50S ribosomal protein L33 1</fullName>
    </alternativeName>
</protein>
<comment type="similarity">
    <text evidence="2">Belongs to the bacterial ribosomal protein bL33 family.</text>
</comment>
<keyword id="KW-1185">Reference proteome</keyword>
<keyword id="KW-0687">Ribonucleoprotein</keyword>
<keyword id="KW-0689">Ribosomal protein</keyword>
<organism>
    <name type="scientific">Mycoplasmopsis pulmonis (strain UAB CTIP)</name>
    <name type="common">Mycoplasma pulmonis</name>
    <dbReference type="NCBI Taxonomy" id="272635"/>
    <lineage>
        <taxon>Bacteria</taxon>
        <taxon>Bacillati</taxon>
        <taxon>Mycoplasmatota</taxon>
        <taxon>Mycoplasmoidales</taxon>
        <taxon>Metamycoplasmataceae</taxon>
        <taxon>Mycoplasmopsis</taxon>
    </lineage>
</organism>
<name>RL331_MYCPU</name>
<dbReference type="EMBL" id="AL445564">
    <property type="protein sequence ID" value="CAC13662.1"/>
    <property type="molecule type" value="Genomic_DNA"/>
</dbReference>
<dbReference type="PIR" id="A90573">
    <property type="entry name" value="A90573"/>
</dbReference>
<dbReference type="RefSeq" id="WP_010925290.1">
    <property type="nucleotide sequence ID" value="NC_002771.1"/>
</dbReference>
<dbReference type="SMR" id="Q98Q77"/>
<dbReference type="STRING" id="272635.gene:17577090"/>
<dbReference type="KEGG" id="mpu:MYPU_4890"/>
<dbReference type="eggNOG" id="COG0267">
    <property type="taxonomic scope" value="Bacteria"/>
</dbReference>
<dbReference type="HOGENOM" id="CLU_190949_0_2_14"/>
<dbReference type="BioCyc" id="MPUL272635:G1GT6-493-MONOMER"/>
<dbReference type="Proteomes" id="UP000000528">
    <property type="component" value="Chromosome"/>
</dbReference>
<dbReference type="GO" id="GO:0005737">
    <property type="term" value="C:cytoplasm"/>
    <property type="evidence" value="ECO:0007669"/>
    <property type="project" value="UniProtKB-ARBA"/>
</dbReference>
<dbReference type="GO" id="GO:1990904">
    <property type="term" value="C:ribonucleoprotein complex"/>
    <property type="evidence" value="ECO:0007669"/>
    <property type="project" value="UniProtKB-KW"/>
</dbReference>
<dbReference type="GO" id="GO:0005840">
    <property type="term" value="C:ribosome"/>
    <property type="evidence" value="ECO:0007669"/>
    <property type="project" value="UniProtKB-KW"/>
</dbReference>
<dbReference type="GO" id="GO:0003735">
    <property type="term" value="F:structural constituent of ribosome"/>
    <property type="evidence" value="ECO:0007669"/>
    <property type="project" value="InterPro"/>
</dbReference>
<dbReference type="GO" id="GO:0006412">
    <property type="term" value="P:translation"/>
    <property type="evidence" value="ECO:0007669"/>
    <property type="project" value="UniProtKB-UniRule"/>
</dbReference>
<dbReference type="Gene3D" id="2.20.28.120">
    <property type="entry name" value="Ribosomal protein L33"/>
    <property type="match status" value="1"/>
</dbReference>
<dbReference type="HAMAP" id="MF_00294">
    <property type="entry name" value="Ribosomal_bL33"/>
    <property type="match status" value="1"/>
</dbReference>
<dbReference type="InterPro" id="IPR001705">
    <property type="entry name" value="Ribosomal_bL33"/>
</dbReference>
<dbReference type="InterPro" id="IPR038584">
    <property type="entry name" value="Ribosomal_bL33_sf"/>
</dbReference>
<dbReference type="InterPro" id="IPR011332">
    <property type="entry name" value="Ribosomal_zn-bd"/>
</dbReference>
<dbReference type="NCBIfam" id="NF001764">
    <property type="entry name" value="PRK00504.1"/>
    <property type="match status" value="1"/>
</dbReference>
<dbReference type="NCBIfam" id="NF001860">
    <property type="entry name" value="PRK00595.1"/>
    <property type="match status" value="1"/>
</dbReference>
<dbReference type="NCBIfam" id="TIGR01023">
    <property type="entry name" value="rpmG_bact"/>
    <property type="match status" value="1"/>
</dbReference>
<dbReference type="Pfam" id="PF00471">
    <property type="entry name" value="Ribosomal_L33"/>
    <property type="match status" value="1"/>
</dbReference>
<dbReference type="SUPFAM" id="SSF57829">
    <property type="entry name" value="Zn-binding ribosomal proteins"/>
    <property type="match status" value="1"/>
</dbReference>
<gene>
    <name type="primary">rpmG1</name>
    <name type="ordered locus">MYPU_4890</name>
</gene>
<accession>Q98Q77</accession>
<reference key="1">
    <citation type="journal article" date="2001" name="Nucleic Acids Res.">
        <title>The complete genome sequence of the murine respiratory pathogen Mycoplasma pulmonis.</title>
        <authorList>
            <person name="Chambaud I."/>
            <person name="Heilig R."/>
            <person name="Ferris S."/>
            <person name="Barbe V."/>
            <person name="Samson D."/>
            <person name="Galisson F."/>
            <person name="Moszer I."/>
            <person name="Dybvig K."/>
            <person name="Wroblewski H."/>
            <person name="Viari A."/>
            <person name="Rocha E.P.C."/>
            <person name="Blanchard A."/>
        </authorList>
    </citation>
    <scope>NUCLEOTIDE SEQUENCE [LARGE SCALE GENOMIC DNA]</scope>
    <source>
        <strain>UAB CTIP</strain>
    </source>
</reference>
<proteinExistence type="inferred from homology"/>
<feature type="chain" id="PRO_0000170192" description="Large ribosomal subunit protein bL33A">
    <location>
        <begin position="1"/>
        <end position="50"/>
    </location>
</feature>